<accession>A8LPA9</accession>
<gene>
    <name evidence="1" type="primary">hslU</name>
    <name type="ordered locus">Dshi_3441</name>
</gene>
<feature type="chain" id="PRO_1000078444" description="ATP-dependent protease ATPase subunit HslU">
    <location>
        <begin position="1"/>
        <end position="437"/>
    </location>
</feature>
<feature type="binding site" evidence="1">
    <location>
        <position position="18"/>
    </location>
    <ligand>
        <name>ATP</name>
        <dbReference type="ChEBI" id="CHEBI:30616"/>
    </ligand>
</feature>
<feature type="binding site" evidence="1">
    <location>
        <begin position="60"/>
        <end position="65"/>
    </location>
    <ligand>
        <name>ATP</name>
        <dbReference type="ChEBI" id="CHEBI:30616"/>
    </ligand>
</feature>
<feature type="binding site" evidence="1">
    <location>
        <position position="250"/>
    </location>
    <ligand>
        <name>ATP</name>
        <dbReference type="ChEBI" id="CHEBI:30616"/>
    </ligand>
</feature>
<feature type="binding site" evidence="1">
    <location>
        <position position="315"/>
    </location>
    <ligand>
        <name>ATP</name>
        <dbReference type="ChEBI" id="CHEBI:30616"/>
    </ligand>
</feature>
<feature type="binding site" evidence="1">
    <location>
        <position position="387"/>
    </location>
    <ligand>
        <name>ATP</name>
        <dbReference type="ChEBI" id="CHEBI:30616"/>
    </ligand>
</feature>
<reference key="1">
    <citation type="journal article" date="2010" name="ISME J.">
        <title>The complete genome sequence of the algal symbiont Dinoroseobacter shibae: a hitchhiker's guide to life in the sea.</title>
        <authorList>
            <person name="Wagner-Dobler I."/>
            <person name="Ballhausen B."/>
            <person name="Berger M."/>
            <person name="Brinkhoff T."/>
            <person name="Buchholz I."/>
            <person name="Bunk B."/>
            <person name="Cypionka H."/>
            <person name="Daniel R."/>
            <person name="Drepper T."/>
            <person name="Gerdts G."/>
            <person name="Hahnke S."/>
            <person name="Han C."/>
            <person name="Jahn D."/>
            <person name="Kalhoefer D."/>
            <person name="Kiss H."/>
            <person name="Klenk H.P."/>
            <person name="Kyrpides N."/>
            <person name="Liebl W."/>
            <person name="Liesegang H."/>
            <person name="Meincke L."/>
            <person name="Pati A."/>
            <person name="Petersen J."/>
            <person name="Piekarski T."/>
            <person name="Pommerenke C."/>
            <person name="Pradella S."/>
            <person name="Pukall R."/>
            <person name="Rabus R."/>
            <person name="Stackebrandt E."/>
            <person name="Thole S."/>
            <person name="Thompson L."/>
            <person name="Tielen P."/>
            <person name="Tomasch J."/>
            <person name="von Jan M."/>
            <person name="Wanphrut N."/>
            <person name="Wichels A."/>
            <person name="Zech H."/>
            <person name="Simon M."/>
        </authorList>
    </citation>
    <scope>NUCLEOTIDE SEQUENCE [LARGE SCALE GENOMIC DNA]</scope>
    <source>
        <strain>DSM 16493 / NCIMB 14021 / DFL 12</strain>
    </source>
</reference>
<dbReference type="EMBL" id="CP000830">
    <property type="protein sequence ID" value="ABV95174.1"/>
    <property type="molecule type" value="Genomic_DNA"/>
</dbReference>
<dbReference type="RefSeq" id="WP_012180098.1">
    <property type="nucleotide sequence ID" value="NC_009952.1"/>
</dbReference>
<dbReference type="SMR" id="A8LPA9"/>
<dbReference type="STRING" id="398580.Dshi_3441"/>
<dbReference type="KEGG" id="dsh:Dshi_3441"/>
<dbReference type="eggNOG" id="COG1220">
    <property type="taxonomic scope" value="Bacteria"/>
</dbReference>
<dbReference type="HOGENOM" id="CLU_033123_0_0_5"/>
<dbReference type="OrthoDB" id="9804062at2"/>
<dbReference type="Proteomes" id="UP000006833">
    <property type="component" value="Chromosome"/>
</dbReference>
<dbReference type="GO" id="GO:0009376">
    <property type="term" value="C:HslUV protease complex"/>
    <property type="evidence" value="ECO:0007669"/>
    <property type="project" value="UniProtKB-UniRule"/>
</dbReference>
<dbReference type="GO" id="GO:0005524">
    <property type="term" value="F:ATP binding"/>
    <property type="evidence" value="ECO:0007669"/>
    <property type="project" value="UniProtKB-UniRule"/>
</dbReference>
<dbReference type="GO" id="GO:0016887">
    <property type="term" value="F:ATP hydrolysis activity"/>
    <property type="evidence" value="ECO:0007669"/>
    <property type="project" value="InterPro"/>
</dbReference>
<dbReference type="GO" id="GO:0008233">
    <property type="term" value="F:peptidase activity"/>
    <property type="evidence" value="ECO:0007669"/>
    <property type="project" value="InterPro"/>
</dbReference>
<dbReference type="GO" id="GO:0036402">
    <property type="term" value="F:proteasome-activating activity"/>
    <property type="evidence" value="ECO:0007669"/>
    <property type="project" value="UniProtKB-UniRule"/>
</dbReference>
<dbReference type="GO" id="GO:0043335">
    <property type="term" value="P:protein unfolding"/>
    <property type="evidence" value="ECO:0007669"/>
    <property type="project" value="UniProtKB-UniRule"/>
</dbReference>
<dbReference type="GO" id="GO:0051603">
    <property type="term" value="P:proteolysis involved in protein catabolic process"/>
    <property type="evidence" value="ECO:0007669"/>
    <property type="project" value="TreeGrafter"/>
</dbReference>
<dbReference type="CDD" id="cd19498">
    <property type="entry name" value="RecA-like_HslU"/>
    <property type="match status" value="1"/>
</dbReference>
<dbReference type="FunFam" id="3.40.50.300:FF:000213">
    <property type="entry name" value="ATP-dependent protease ATPase subunit HslU"/>
    <property type="match status" value="1"/>
</dbReference>
<dbReference type="FunFam" id="3.40.50.300:FF:000220">
    <property type="entry name" value="ATP-dependent protease ATPase subunit HslU"/>
    <property type="match status" value="1"/>
</dbReference>
<dbReference type="Gene3D" id="1.10.8.60">
    <property type="match status" value="1"/>
</dbReference>
<dbReference type="Gene3D" id="3.40.50.300">
    <property type="entry name" value="P-loop containing nucleotide triphosphate hydrolases"/>
    <property type="match status" value="2"/>
</dbReference>
<dbReference type="HAMAP" id="MF_00249">
    <property type="entry name" value="HslU"/>
    <property type="match status" value="1"/>
</dbReference>
<dbReference type="InterPro" id="IPR003593">
    <property type="entry name" value="AAA+_ATPase"/>
</dbReference>
<dbReference type="InterPro" id="IPR050052">
    <property type="entry name" value="ATP-dep_Clp_protease_ClpX"/>
</dbReference>
<dbReference type="InterPro" id="IPR003959">
    <property type="entry name" value="ATPase_AAA_core"/>
</dbReference>
<dbReference type="InterPro" id="IPR019489">
    <property type="entry name" value="Clp_ATPase_C"/>
</dbReference>
<dbReference type="InterPro" id="IPR004491">
    <property type="entry name" value="HslU"/>
</dbReference>
<dbReference type="InterPro" id="IPR027417">
    <property type="entry name" value="P-loop_NTPase"/>
</dbReference>
<dbReference type="NCBIfam" id="TIGR00390">
    <property type="entry name" value="hslU"/>
    <property type="match status" value="1"/>
</dbReference>
<dbReference type="NCBIfam" id="NF003544">
    <property type="entry name" value="PRK05201.1"/>
    <property type="match status" value="1"/>
</dbReference>
<dbReference type="PANTHER" id="PTHR48102">
    <property type="entry name" value="ATP-DEPENDENT CLP PROTEASE ATP-BINDING SUBUNIT CLPX-LIKE, MITOCHONDRIAL-RELATED"/>
    <property type="match status" value="1"/>
</dbReference>
<dbReference type="PANTHER" id="PTHR48102:SF3">
    <property type="entry name" value="ATP-DEPENDENT PROTEASE ATPASE SUBUNIT HSLU"/>
    <property type="match status" value="1"/>
</dbReference>
<dbReference type="Pfam" id="PF00004">
    <property type="entry name" value="AAA"/>
    <property type="match status" value="1"/>
</dbReference>
<dbReference type="Pfam" id="PF07724">
    <property type="entry name" value="AAA_2"/>
    <property type="match status" value="1"/>
</dbReference>
<dbReference type="SMART" id="SM00382">
    <property type="entry name" value="AAA"/>
    <property type="match status" value="1"/>
</dbReference>
<dbReference type="SMART" id="SM01086">
    <property type="entry name" value="ClpB_D2-small"/>
    <property type="match status" value="1"/>
</dbReference>
<dbReference type="SUPFAM" id="SSF52540">
    <property type="entry name" value="P-loop containing nucleoside triphosphate hydrolases"/>
    <property type="match status" value="1"/>
</dbReference>
<name>HSLU_DINSH</name>
<comment type="function">
    <text evidence="1">ATPase subunit of a proteasome-like degradation complex; this subunit has chaperone activity. The binding of ATP and its subsequent hydrolysis by HslU are essential for unfolding of protein substrates subsequently hydrolyzed by HslV. HslU recognizes the N-terminal part of its protein substrates and unfolds these before they are guided to HslV for hydrolysis.</text>
</comment>
<comment type="subunit">
    <text evidence="1">A double ring-shaped homohexamer of HslV is capped on each side by a ring-shaped HslU homohexamer. The assembly of the HslU/HslV complex is dependent on binding of ATP.</text>
</comment>
<comment type="subcellular location">
    <subcellularLocation>
        <location evidence="1">Cytoplasm</location>
    </subcellularLocation>
</comment>
<comment type="similarity">
    <text evidence="1">Belongs to the ClpX chaperone family. HslU subfamily.</text>
</comment>
<evidence type="ECO:0000255" key="1">
    <source>
        <dbReference type="HAMAP-Rule" id="MF_00249"/>
    </source>
</evidence>
<protein>
    <recommendedName>
        <fullName evidence="1">ATP-dependent protease ATPase subunit HslU</fullName>
    </recommendedName>
    <alternativeName>
        <fullName evidence="1">Unfoldase HslU</fullName>
    </alternativeName>
</protein>
<organism>
    <name type="scientific">Dinoroseobacter shibae (strain DSM 16493 / NCIMB 14021 / DFL 12)</name>
    <dbReference type="NCBI Taxonomy" id="398580"/>
    <lineage>
        <taxon>Bacteria</taxon>
        <taxon>Pseudomonadati</taxon>
        <taxon>Pseudomonadota</taxon>
        <taxon>Alphaproteobacteria</taxon>
        <taxon>Rhodobacterales</taxon>
        <taxon>Roseobacteraceae</taxon>
        <taxon>Dinoroseobacter</taxon>
    </lineage>
</organism>
<keyword id="KW-0067">ATP-binding</keyword>
<keyword id="KW-0143">Chaperone</keyword>
<keyword id="KW-0963">Cytoplasm</keyword>
<keyword id="KW-0547">Nucleotide-binding</keyword>
<keyword id="KW-1185">Reference proteome</keyword>
<keyword id="KW-0346">Stress response</keyword>
<proteinExistence type="inferred from homology"/>
<sequence length="437" mass="48424">MTDLTPREIVSELDRFIIGQKDAKRAVAVALRNRWRRKQLSDDLREEVYPKNILMIGPTGVGKTEISRRLAKLARAPFIKVEATKFTEVGYVGRDVEQIIRDLVENAITMTRDHMREEVKANAHQAAEERVIEAIAGSDAREATREMFRKKLKAGELDDTVIELEVADTSNPMSMFEIPGQPGMNPMGGGMDLVELFGKAFGGRTVRKKLTVAQSYEVLISEEADKLLDDEAVNRSAVTAVEQNGIVFLDEIDKVCARSDARGADVSREGVQRDLLPLIEGTTVSTKYGPVKTDHVLFIASGAFHIAKPSDLLPELQGRLPIRVELRPLTEQDFVRILTETDNALTLQYTALMGTESVTVTFAEDGIAALARIAAEVNQSVENIGARRLYTVMERVFEELSFAAPDRSGDEITVDAEFVEANLGALTRDTDLSRYVL</sequence>